<sequence>MTTITITRPDDWHIHLRDGAQLKDTVRDISRYMGRAIVMPNLVPPAIDTETALAYYDRIKAQVPAGSQFEPLMVLYLTDKTSPDEIRKAKASGKIVAAKLYPAGATTNSDSGVTDVKNIYPVLQAMQEVGMLFLVHGEVTDSAIDIFDRERVFIENILSKIVADFPALKIVLEHITTKDAVDFVTQASDNVAATITAHHLLYNRNHMLAGGIRPHFYCLPILKRNTHQQALLGAAASGNKKFFLGTDSAPHAKDKKEAACGCAGSYTAHAAIELYAEAFESVNALDKLEAFASFNGPDFYNLPRNSDTITLVKKSWDVPATYPLGDTNVVPIRAGEAIDWQVE</sequence>
<dbReference type="EC" id="3.5.2.3" evidence="1"/>
<dbReference type="EMBL" id="CP000681">
    <property type="protein sequence ID" value="ABP76708.1"/>
    <property type="molecule type" value="Genomic_DNA"/>
</dbReference>
<dbReference type="SMR" id="A4Y9S5"/>
<dbReference type="STRING" id="319224.Sputcn32_2994"/>
<dbReference type="MEROPS" id="M38.A02"/>
<dbReference type="KEGG" id="spc:Sputcn32_2994"/>
<dbReference type="eggNOG" id="COG0418">
    <property type="taxonomic scope" value="Bacteria"/>
</dbReference>
<dbReference type="HOGENOM" id="CLU_041558_1_0_6"/>
<dbReference type="UniPathway" id="UPA00070">
    <property type="reaction ID" value="UER00117"/>
</dbReference>
<dbReference type="GO" id="GO:0005829">
    <property type="term" value="C:cytosol"/>
    <property type="evidence" value="ECO:0007669"/>
    <property type="project" value="TreeGrafter"/>
</dbReference>
<dbReference type="GO" id="GO:0004151">
    <property type="term" value="F:dihydroorotase activity"/>
    <property type="evidence" value="ECO:0007669"/>
    <property type="project" value="UniProtKB-UniRule"/>
</dbReference>
<dbReference type="GO" id="GO:0008270">
    <property type="term" value="F:zinc ion binding"/>
    <property type="evidence" value="ECO:0007669"/>
    <property type="project" value="UniProtKB-UniRule"/>
</dbReference>
<dbReference type="GO" id="GO:0006207">
    <property type="term" value="P:'de novo' pyrimidine nucleobase biosynthetic process"/>
    <property type="evidence" value="ECO:0007669"/>
    <property type="project" value="TreeGrafter"/>
</dbReference>
<dbReference type="GO" id="GO:0044205">
    <property type="term" value="P:'de novo' UMP biosynthetic process"/>
    <property type="evidence" value="ECO:0007669"/>
    <property type="project" value="UniProtKB-UniRule"/>
</dbReference>
<dbReference type="CDD" id="cd01294">
    <property type="entry name" value="DHOase"/>
    <property type="match status" value="1"/>
</dbReference>
<dbReference type="FunFam" id="3.20.20.140:FF:000006">
    <property type="entry name" value="Dihydroorotase"/>
    <property type="match status" value="1"/>
</dbReference>
<dbReference type="Gene3D" id="3.20.20.140">
    <property type="entry name" value="Metal-dependent hydrolases"/>
    <property type="match status" value="1"/>
</dbReference>
<dbReference type="HAMAP" id="MF_00219">
    <property type="entry name" value="PyrC_classII"/>
    <property type="match status" value="1"/>
</dbReference>
<dbReference type="InterPro" id="IPR006680">
    <property type="entry name" value="Amidohydro-rel"/>
</dbReference>
<dbReference type="InterPro" id="IPR004721">
    <property type="entry name" value="DHOdimr"/>
</dbReference>
<dbReference type="InterPro" id="IPR002195">
    <property type="entry name" value="Dihydroorotase_CS"/>
</dbReference>
<dbReference type="InterPro" id="IPR032466">
    <property type="entry name" value="Metal_Hydrolase"/>
</dbReference>
<dbReference type="NCBIfam" id="TIGR00856">
    <property type="entry name" value="pyrC_dimer"/>
    <property type="match status" value="1"/>
</dbReference>
<dbReference type="PANTHER" id="PTHR43137">
    <property type="entry name" value="DIHYDROOROTASE"/>
    <property type="match status" value="1"/>
</dbReference>
<dbReference type="PANTHER" id="PTHR43137:SF1">
    <property type="entry name" value="DIHYDROOROTASE"/>
    <property type="match status" value="1"/>
</dbReference>
<dbReference type="Pfam" id="PF01979">
    <property type="entry name" value="Amidohydro_1"/>
    <property type="match status" value="1"/>
</dbReference>
<dbReference type="PIRSF" id="PIRSF001237">
    <property type="entry name" value="DHOdimr"/>
    <property type="match status" value="1"/>
</dbReference>
<dbReference type="SUPFAM" id="SSF51556">
    <property type="entry name" value="Metallo-dependent hydrolases"/>
    <property type="match status" value="1"/>
</dbReference>
<dbReference type="PROSITE" id="PS00482">
    <property type="entry name" value="DIHYDROOROTASE_1"/>
    <property type="match status" value="1"/>
</dbReference>
<dbReference type="PROSITE" id="PS00483">
    <property type="entry name" value="DIHYDROOROTASE_2"/>
    <property type="match status" value="1"/>
</dbReference>
<name>PYRC_SHEPC</name>
<feature type="chain" id="PRO_1000024057" description="Dihydroorotase">
    <location>
        <begin position="1"/>
        <end position="343"/>
    </location>
</feature>
<feature type="active site" evidence="1">
    <location>
        <position position="247"/>
    </location>
</feature>
<feature type="binding site" evidence="1">
    <location>
        <position position="13"/>
    </location>
    <ligand>
        <name>Zn(2+)</name>
        <dbReference type="ChEBI" id="CHEBI:29105"/>
        <label>1</label>
    </ligand>
</feature>
<feature type="binding site" evidence="1">
    <location>
        <begin position="15"/>
        <end position="17"/>
    </location>
    <ligand>
        <name>substrate</name>
    </ligand>
</feature>
<feature type="binding site" evidence="1">
    <location>
        <position position="15"/>
    </location>
    <ligand>
        <name>Zn(2+)</name>
        <dbReference type="ChEBI" id="CHEBI:29105"/>
        <label>1</label>
    </ligand>
</feature>
<feature type="binding site" evidence="1">
    <location>
        <position position="41"/>
    </location>
    <ligand>
        <name>substrate</name>
    </ligand>
</feature>
<feature type="binding site" description="via carbamate group" evidence="1">
    <location>
        <position position="99"/>
    </location>
    <ligand>
        <name>Zn(2+)</name>
        <dbReference type="ChEBI" id="CHEBI:29105"/>
        <label>1</label>
    </ligand>
</feature>
<feature type="binding site" description="via carbamate group" evidence="1">
    <location>
        <position position="99"/>
    </location>
    <ligand>
        <name>Zn(2+)</name>
        <dbReference type="ChEBI" id="CHEBI:29105"/>
        <label>2</label>
    </ligand>
</feature>
<feature type="binding site" evidence="1">
    <location>
        <position position="136"/>
    </location>
    <ligand>
        <name>substrate</name>
    </ligand>
</feature>
<feature type="binding site" evidence="1">
    <location>
        <position position="136"/>
    </location>
    <ligand>
        <name>Zn(2+)</name>
        <dbReference type="ChEBI" id="CHEBI:29105"/>
        <label>2</label>
    </ligand>
</feature>
<feature type="binding site" evidence="1">
    <location>
        <position position="174"/>
    </location>
    <ligand>
        <name>Zn(2+)</name>
        <dbReference type="ChEBI" id="CHEBI:29105"/>
        <label>2</label>
    </ligand>
</feature>
<feature type="binding site" evidence="1">
    <location>
        <position position="219"/>
    </location>
    <ligand>
        <name>substrate</name>
    </ligand>
</feature>
<feature type="binding site" evidence="1">
    <location>
        <position position="247"/>
    </location>
    <ligand>
        <name>Zn(2+)</name>
        <dbReference type="ChEBI" id="CHEBI:29105"/>
        <label>1</label>
    </ligand>
</feature>
<feature type="binding site" evidence="1">
    <location>
        <position position="251"/>
    </location>
    <ligand>
        <name>substrate</name>
    </ligand>
</feature>
<feature type="binding site" evidence="1">
    <location>
        <position position="263"/>
    </location>
    <ligand>
        <name>substrate</name>
    </ligand>
</feature>
<feature type="modified residue" description="N6-carboxylysine" evidence="1">
    <location>
        <position position="99"/>
    </location>
</feature>
<accession>A4Y9S5</accession>
<comment type="function">
    <text evidence="1">Catalyzes the reversible cyclization of carbamoyl aspartate to dihydroorotate.</text>
</comment>
<comment type="catalytic activity">
    <reaction evidence="1">
        <text>(S)-dihydroorotate + H2O = N-carbamoyl-L-aspartate + H(+)</text>
        <dbReference type="Rhea" id="RHEA:24296"/>
        <dbReference type="ChEBI" id="CHEBI:15377"/>
        <dbReference type="ChEBI" id="CHEBI:15378"/>
        <dbReference type="ChEBI" id="CHEBI:30864"/>
        <dbReference type="ChEBI" id="CHEBI:32814"/>
        <dbReference type="EC" id="3.5.2.3"/>
    </reaction>
</comment>
<comment type="cofactor">
    <cofactor evidence="1">
        <name>Zn(2+)</name>
        <dbReference type="ChEBI" id="CHEBI:29105"/>
    </cofactor>
    <text evidence="1">Binds 2 Zn(2+) ions per subunit.</text>
</comment>
<comment type="pathway">
    <text evidence="1">Pyrimidine metabolism; UMP biosynthesis via de novo pathway; (S)-dihydroorotate from bicarbonate: step 3/3.</text>
</comment>
<comment type="subunit">
    <text evidence="1">Homodimer.</text>
</comment>
<comment type="similarity">
    <text evidence="1">Belongs to the metallo-dependent hydrolases superfamily. DHOase family. Class II DHOase subfamily.</text>
</comment>
<proteinExistence type="inferred from homology"/>
<reference key="1">
    <citation type="submission" date="2007-04" db="EMBL/GenBank/DDBJ databases">
        <title>Complete sequence of Shewanella putrefaciens CN-32.</title>
        <authorList>
            <consortium name="US DOE Joint Genome Institute"/>
            <person name="Copeland A."/>
            <person name="Lucas S."/>
            <person name="Lapidus A."/>
            <person name="Barry K."/>
            <person name="Detter J.C."/>
            <person name="Glavina del Rio T."/>
            <person name="Hammon N."/>
            <person name="Israni S."/>
            <person name="Dalin E."/>
            <person name="Tice H."/>
            <person name="Pitluck S."/>
            <person name="Chain P."/>
            <person name="Malfatti S."/>
            <person name="Shin M."/>
            <person name="Vergez L."/>
            <person name="Schmutz J."/>
            <person name="Larimer F."/>
            <person name="Land M."/>
            <person name="Hauser L."/>
            <person name="Kyrpides N."/>
            <person name="Mikhailova N."/>
            <person name="Romine M.F."/>
            <person name="Fredrickson J."/>
            <person name="Tiedje J."/>
            <person name="Richardson P."/>
        </authorList>
    </citation>
    <scope>NUCLEOTIDE SEQUENCE [LARGE SCALE GENOMIC DNA]</scope>
    <source>
        <strain>CN-32 / ATCC BAA-453</strain>
    </source>
</reference>
<organism>
    <name type="scientific">Shewanella putrefaciens (strain CN-32 / ATCC BAA-453)</name>
    <dbReference type="NCBI Taxonomy" id="319224"/>
    <lineage>
        <taxon>Bacteria</taxon>
        <taxon>Pseudomonadati</taxon>
        <taxon>Pseudomonadota</taxon>
        <taxon>Gammaproteobacteria</taxon>
        <taxon>Alteromonadales</taxon>
        <taxon>Shewanellaceae</taxon>
        <taxon>Shewanella</taxon>
    </lineage>
</organism>
<evidence type="ECO:0000255" key="1">
    <source>
        <dbReference type="HAMAP-Rule" id="MF_00219"/>
    </source>
</evidence>
<protein>
    <recommendedName>
        <fullName evidence="1">Dihydroorotase</fullName>
        <shortName evidence="1">DHOase</shortName>
        <ecNumber evidence="1">3.5.2.3</ecNumber>
    </recommendedName>
</protein>
<gene>
    <name evidence="1" type="primary">pyrC</name>
    <name type="ordered locus">Sputcn32_2994</name>
</gene>
<keyword id="KW-0378">Hydrolase</keyword>
<keyword id="KW-0479">Metal-binding</keyword>
<keyword id="KW-0665">Pyrimidine biosynthesis</keyword>
<keyword id="KW-0862">Zinc</keyword>